<feature type="chain" id="PRO_0000361822" description="Protein pelota homolog">
    <location>
        <begin position="1"/>
        <end position="342"/>
    </location>
</feature>
<evidence type="ECO:0000255" key="1">
    <source>
        <dbReference type="HAMAP-Rule" id="MF_01853"/>
    </source>
</evidence>
<organism>
    <name type="scientific">Sulfolobus acidocaldarius (strain ATCC 33909 / DSM 639 / JCM 8929 / NBRC 15157 / NCIMB 11770)</name>
    <dbReference type="NCBI Taxonomy" id="330779"/>
    <lineage>
        <taxon>Archaea</taxon>
        <taxon>Thermoproteota</taxon>
        <taxon>Thermoprotei</taxon>
        <taxon>Sulfolobales</taxon>
        <taxon>Sulfolobaceae</taxon>
        <taxon>Sulfolobus</taxon>
    </lineage>
</organism>
<dbReference type="EC" id="3.1.-.-" evidence="1"/>
<dbReference type="EMBL" id="CP000077">
    <property type="protein sequence ID" value="AAY79499.1"/>
    <property type="molecule type" value="Genomic_DNA"/>
</dbReference>
<dbReference type="RefSeq" id="WP_011277000.1">
    <property type="nucleotide sequence ID" value="NC_007181.1"/>
</dbReference>
<dbReference type="SMR" id="Q4JCI0"/>
<dbReference type="STRING" id="330779.Saci_0072"/>
<dbReference type="GeneID" id="14550602"/>
<dbReference type="KEGG" id="sai:Saci_0072"/>
<dbReference type="PATRIC" id="fig|330779.12.peg.66"/>
<dbReference type="eggNOG" id="arCOG01741">
    <property type="taxonomic scope" value="Archaea"/>
</dbReference>
<dbReference type="HOGENOM" id="CLU_023334_0_0_2"/>
<dbReference type="Proteomes" id="UP000001018">
    <property type="component" value="Chromosome"/>
</dbReference>
<dbReference type="GO" id="GO:0005737">
    <property type="term" value="C:cytoplasm"/>
    <property type="evidence" value="ECO:0007669"/>
    <property type="project" value="UniProtKB-SubCell"/>
</dbReference>
<dbReference type="GO" id="GO:0004519">
    <property type="term" value="F:endonuclease activity"/>
    <property type="evidence" value="ECO:0007669"/>
    <property type="project" value="UniProtKB-UniRule"/>
</dbReference>
<dbReference type="GO" id="GO:0046872">
    <property type="term" value="F:metal ion binding"/>
    <property type="evidence" value="ECO:0007669"/>
    <property type="project" value="UniProtKB-UniRule"/>
</dbReference>
<dbReference type="GO" id="GO:0070651">
    <property type="term" value="P:nonfunctional rRNA decay"/>
    <property type="evidence" value="ECO:0007669"/>
    <property type="project" value="TreeGrafter"/>
</dbReference>
<dbReference type="GO" id="GO:0070966">
    <property type="term" value="P:nuclear-transcribed mRNA catabolic process, no-go decay"/>
    <property type="evidence" value="ECO:0007669"/>
    <property type="project" value="InterPro"/>
</dbReference>
<dbReference type="GO" id="GO:0070481">
    <property type="term" value="P:nuclear-transcribed mRNA catabolic process, non-stop decay"/>
    <property type="evidence" value="ECO:0007669"/>
    <property type="project" value="InterPro"/>
</dbReference>
<dbReference type="GO" id="GO:0032790">
    <property type="term" value="P:ribosome disassembly"/>
    <property type="evidence" value="ECO:0007669"/>
    <property type="project" value="TreeGrafter"/>
</dbReference>
<dbReference type="GO" id="GO:0071025">
    <property type="term" value="P:RNA surveillance"/>
    <property type="evidence" value="ECO:0007669"/>
    <property type="project" value="InterPro"/>
</dbReference>
<dbReference type="FunFam" id="2.30.30.870:FF:000002">
    <property type="entry name" value="Protein pelota homolog"/>
    <property type="match status" value="1"/>
</dbReference>
<dbReference type="Gene3D" id="3.30.1330.30">
    <property type="match status" value="1"/>
</dbReference>
<dbReference type="Gene3D" id="3.30.420.60">
    <property type="entry name" value="eRF1 domain 2"/>
    <property type="match status" value="1"/>
</dbReference>
<dbReference type="Gene3D" id="2.30.30.870">
    <property type="entry name" value="Pelota, domain A"/>
    <property type="match status" value="1"/>
</dbReference>
<dbReference type="HAMAP" id="MF_01853">
    <property type="entry name" value="PelO"/>
    <property type="match status" value="1"/>
</dbReference>
<dbReference type="InterPro" id="IPR042226">
    <property type="entry name" value="eFR1_2_sf"/>
</dbReference>
<dbReference type="InterPro" id="IPR005140">
    <property type="entry name" value="eRF1_1_Pelota"/>
</dbReference>
<dbReference type="InterPro" id="IPR005142">
    <property type="entry name" value="eRF1_3"/>
</dbReference>
<dbReference type="InterPro" id="IPR038069">
    <property type="entry name" value="Pelota/DOM34_N"/>
</dbReference>
<dbReference type="InterPro" id="IPR023521">
    <property type="entry name" value="Pelota_arc"/>
</dbReference>
<dbReference type="InterPro" id="IPR029064">
    <property type="entry name" value="Ribosomal_eL30-like_sf"/>
</dbReference>
<dbReference type="InterPro" id="IPR004405">
    <property type="entry name" value="Transl-rel_pelota"/>
</dbReference>
<dbReference type="NCBIfam" id="TIGR00111">
    <property type="entry name" value="pelota"/>
    <property type="match status" value="1"/>
</dbReference>
<dbReference type="PANTHER" id="PTHR10853">
    <property type="entry name" value="PELOTA"/>
    <property type="match status" value="1"/>
</dbReference>
<dbReference type="PANTHER" id="PTHR10853:SF0">
    <property type="entry name" value="PROTEIN PELOTA HOMOLOG"/>
    <property type="match status" value="1"/>
</dbReference>
<dbReference type="Pfam" id="PF03463">
    <property type="entry name" value="eRF1_1"/>
    <property type="match status" value="1"/>
</dbReference>
<dbReference type="Pfam" id="PF03465">
    <property type="entry name" value="eRF1_3"/>
    <property type="match status" value="1"/>
</dbReference>
<dbReference type="SMART" id="SM01194">
    <property type="entry name" value="eRF1_1"/>
    <property type="match status" value="1"/>
</dbReference>
<dbReference type="SUPFAM" id="SSF159065">
    <property type="entry name" value="Dom34/Pelota N-terminal domain-like"/>
    <property type="match status" value="1"/>
</dbReference>
<dbReference type="SUPFAM" id="SSF55315">
    <property type="entry name" value="L30e-like"/>
    <property type="match status" value="1"/>
</dbReference>
<dbReference type="SUPFAM" id="SSF53137">
    <property type="entry name" value="Translational machinery components"/>
    <property type="match status" value="1"/>
</dbReference>
<protein>
    <recommendedName>
        <fullName evidence="1">Protein pelota homolog</fullName>
        <ecNumber evidence="1">3.1.-.-</ecNumber>
    </recommendedName>
</protein>
<comment type="function">
    <text evidence="1">May function in recognizing stalled ribosomes, interact with stem-loop structures in stalled mRNA molecules, and effect endonucleolytic cleavage of the mRNA. May play a role in the release non-functional ribosomes and degradation of damaged mRNAs. Has endoribonuclease activity.</text>
</comment>
<comment type="cofactor">
    <cofactor evidence="1">
        <name>a divalent metal cation</name>
        <dbReference type="ChEBI" id="CHEBI:60240"/>
    </cofactor>
</comment>
<comment type="subunit">
    <text evidence="1">Monomer.</text>
</comment>
<comment type="subcellular location">
    <subcellularLocation>
        <location evidence="1">Cytoplasm</location>
    </subcellularLocation>
</comment>
<comment type="domain">
    <text evidence="1">The N-terminal domain has the RNA-binding Sm fold. It harbors the endoribonuclease activity.</text>
</comment>
<comment type="similarity">
    <text evidence="1">Belongs to the eukaryotic release factor 1 family. Pelota subfamily.</text>
</comment>
<proteinExistence type="inferred from homology"/>
<accession>Q4JCI0</accession>
<name>PELO_SULAC</name>
<keyword id="KW-0963">Cytoplasm</keyword>
<keyword id="KW-0255">Endonuclease</keyword>
<keyword id="KW-0378">Hydrolase</keyword>
<keyword id="KW-0479">Metal-binding</keyword>
<keyword id="KW-0540">Nuclease</keyword>
<keyword id="KW-1185">Reference proteome</keyword>
<reference key="1">
    <citation type="journal article" date="2005" name="J. Bacteriol.">
        <title>The genome of Sulfolobus acidocaldarius, a model organism of the Crenarchaeota.</title>
        <authorList>
            <person name="Chen L."/>
            <person name="Bruegger K."/>
            <person name="Skovgaard M."/>
            <person name="Redder P."/>
            <person name="She Q."/>
            <person name="Torarinsson E."/>
            <person name="Greve B."/>
            <person name="Awayez M."/>
            <person name="Zibat A."/>
            <person name="Klenk H.-P."/>
            <person name="Garrett R.A."/>
        </authorList>
    </citation>
    <scope>NUCLEOTIDE SEQUENCE [LARGE SCALE GENOMIC DNA]</scope>
    <source>
        <strain>ATCC 33909 / DSM 639 / JCM 8929 / NBRC 15157 / NCIMB 11770</strain>
    </source>
</reference>
<sequence>MKILEFNDKRGSLKLHVENEDDLWLLHIIIKKGDRIVAKTTRDISMGKDSRRIPMTIELQVEYTEFQNFTTRLRIHGLILDAPERFGIKGAHHTVNLDIGDEVIIIKEQWSNYELEKIREQEEKKGKLLIALVDVDEYIIALLMKQGVKILAEKSLQTPGKDNDVVNENIEEMANEIISFVKLTGVNVIIIAGPGPFKDMVNQKIKQIDNKLIVYVDSVSSASRAGLNELLRRDIIDQVYREFEIAQQLKILESIMENLAKNTGLVVYGIEDIKKANELGAVDKLLITEDYLTDTGREIIDELLRDIEKKKGKIMIVPKDSPIYYQVKNLTGIVSLLRFRIN</sequence>
<gene>
    <name evidence="1" type="primary">pelA</name>
    <name type="ordered locus">Saci_0072</name>
</gene>